<name>RNH2_STRPZ</name>
<protein>
    <recommendedName>
        <fullName evidence="1">Ribonuclease HII</fullName>
        <shortName evidence="1">RNase HII</shortName>
        <ecNumber evidence="1">3.1.26.4</ecNumber>
    </recommendedName>
</protein>
<proteinExistence type="inferred from homology"/>
<comment type="function">
    <text evidence="1">Endonuclease that specifically degrades the RNA of RNA-DNA hybrids.</text>
</comment>
<comment type="catalytic activity">
    <reaction evidence="1">
        <text>Endonucleolytic cleavage to 5'-phosphomonoester.</text>
        <dbReference type="EC" id="3.1.26.4"/>
    </reaction>
</comment>
<comment type="cofactor">
    <cofactor evidence="1">
        <name>Mn(2+)</name>
        <dbReference type="ChEBI" id="CHEBI:29035"/>
    </cofactor>
    <cofactor evidence="1">
        <name>Mg(2+)</name>
        <dbReference type="ChEBI" id="CHEBI:18420"/>
    </cofactor>
    <text evidence="1">Manganese or magnesium. Binds 1 divalent metal ion per monomer in the absence of substrate. May bind a second metal ion after substrate binding.</text>
</comment>
<comment type="subcellular location">
    <subcellularLocation>
        <location evidence="1">Cytoplasm</location>
    </subcellularLocation>
</comment>
<comment type="similarity">
    <text evidence="1">Belongs to the RNase HII family.</text>
</comment>
<organism>
    <name type="scientific">Streptococcus pyogenes serotype M49 (strain NZ131)</name>
    <dbReference type="NCBI Taxonomy" id="471876"/>
    <lineage>
        <taxon>Bacteria</taxon>
        <taxon>Bacillati</taxon>
        <taxon>Bacillota</taxon>
        <taxon>Bacilli</taxon>
        <taxon>Lactobacillales</taxon>
        <taxon>Streptococcaceae</taxon>
        <taxon>Streptococcus</taxon>
    </lineage>
</organism>
<dbReference type="EC" id="3.1.26.4" evidence="1"/>
<dbReference type="EMBL" id="CP000829">
    <property type="protein sequence ID" value="ACI61219.1"/>
    <property type="molecule type" value="Genomic_DNA"/>
</dbReference>
<dbReference type="SMR" id="B5XLK7"/>
<dbReference type="KEGG" id="soz:Spy49_0913"/>
<dbReference type="HOGENOM" id="CLU_036532_2_1_9"/>
<dbReference type="Proteomes" id="UP000001039">
    <property type="component" value="Chromosome"/>
</dbReference>
<dbReference type="GO" id="GO:0005737">
    <property type="term" value="C:cytoplasm"/>
    <property type="evidence" value="ECO:0007669"/>
    <property type="project" value="UniProtKB-SubCell"/>
</dbReference>
<dbReference type="GO" id="GO:0032299">
    <property type="term" value="C:ribonuclease H2 complex"/>
    <property type="evidence" value="ECO:0007669"/>
    <property type="project" value="TreeGrafter"/>
</dbReference>
<dbReference type="GO" id="GO:0030145">
    <property type="term" value="F:manganese ion binding"/>
    <property type="evidence" value="ECO:0007669"/>
    <property type="project" value="UniProtKB-UniRule"/>
</dbReference>
<dbReference type="GO" id="GO:0003723">
    <property type="term" value="F:RNA binding"/>
    <property type="evidence" value="ECO:0007669"/>
    <property type="project" value="InterPro"/>
</dbReference>
<dbReference type="GO" id="GO:0004523">
    <property type="term" value="F:RNA-DNA hybrid ribonuclease activity"/>
    <property type="evidence" value="ECO:0007669"/>
    <property type="project" value="UniProtKB-UniRule"/>
</dbReference>
<dbReference type="GO" id="GO:0043137">
    <property type="term" value="P:DNA replication, removal of RNA primer"/>
    <property type="evidence" value="ECO:0007669"/>
    <property type="project" value="TreeGrafter"/>
</dbReference>
<dbReference type="GO" id="GO:0006298">
    <property type="term" value="P:mismatch repair"/>
    <property type="evidence" value="ECO:0007669"/>
    <property type="project" value="TreeGrafter"/>
</dbReference>
<dbReference type="CDD" id="cd07182">
    <property type="entry name" value="RNase_HII_bacteria_HII_like"/>
    <property type="match status" value="1"/>
</dbReference>
<dbReference type="FunFam" id="3.30.420.10:FF:000006">
    <property type="entry name" value="Ribonuclease HII"/>
    <property type="match status" value="1"/>
</dbReference>
<dbReference type="Gene3D" id="3.30.420.10">
    <property type="entry name" value="Ribonuclease H-like superfamily/Ribonuclease H"/>
    <property type="match status" value="1"/>
</dbReference>
<dbReference type="HAMAP" id="MF_00052_B">
    <property type="entry name" value="RNase_HII_B"/>
    <property type="match status" value="1"/>
</dbReference>
<dbReference type="InterPro" id="IPR022898">
    <property type="entry name" value="RNase_HII"/>
</dbReference>
<dbReference type="InterPro" id="IPR001352">
    <property type="entry name" value="RNase_HII/HIII"/>
</dbReference>
<dbReference type="InterPro" id="IPR024567">
    <property type="entry name" value="RNase_HII/HIII_dom"/>
</dbReference>
<dbReference type="InterPro" id="IPR012337">
    <property type="entry name" value="RNaseH-like_sf"/>
</dbReference>
<dbReference type="InterPro" id="IPR036397">
    <property type="entry name" value="RNaseH_sf"/>
</dbReference>
<dbReference type="NCBIfam" id="NF000594">
    <property type="entry name" value="PRK00015.1-1"/>
    <property type="match status" value="1"/>
</dbReference>
<dbReference type="NCBIfam" id="NF000595">
    <property type="entry name" value="PRK00015.1-3"/>
    <property type="match status" value="1"/>
</dbReference>
<dbReference type="PANTHER" id="PTHR10954">
    <property type="entry name" value="RIBONUCLEASE H2 SUBUNIT A"/>
    <property type="match status" value="1"/>
</dbReference>
<dbReference type="PANTHER" id="PTHR10954:SF18">
    <property type="entry name" value="RIBONUCLEASE HII"/>
    <property type="match status" value="1"/>
</dbReference>
<dbReference type="Pfam" id="PF01351">
    <property type="entry name" value="RNase_HII"/>
    <property type="match status" value="1"/>
</dbReference>
<dbReference type="SUPFAM" id="SSF53098">
    <property type="entry name" value="Ribonuclease H-like"/>
    <property type="match status" value="1"/>
</dbReference>
<dbReference type="PROSITE" id="PS51975">
    <property type="entry name" value="RNASE_H_2"/>
    <property type="match status" value="1"/>
</dbReference>
<reference key="1">
    <citation type="journal article" date="2008" name="J. Bacteriol.">
        <title>Genome sequence of a nephritogenic and highly transformable M49 strain of Streptococcus pyogenes.</title>
        <authorList>
            <person name="McShan W.M."/>
            <person name="Ferretti J.J."/>
            <person name="Karasawa T."/>
            <person name="Suvorov A.N."/>
            <person name="Lin S."/>
            <person name="Qin B."/>
            <person name="Jia H."/>
            <person name="Kenton S."/>
            <person name="Najar F."/>
            <person name="Wu H."/>
            <person name="Scott J."/>
            <person name="Roe B.A."/>
            <person name="Savic D.J."/>
        </authorList>
    </citation>
    <scope>NUCLEOTIDE SEQUENCE [LARGE SCALE GENOMIC DNA]</scope>
    <source>
        <strain>NZ131</strain>
    </source>
</reference>
<feature type="chain" id="PRO_1000091662" description="Ribonuclease HII">
    <location>
        <begin position="1"/>
        <end position="263"/>
    </location>
</feature>
<feature type="domain" description="RNase H type-2" evidence="2">
    <location>
        <begin position="71"/>
        <end position="262"/>
    </location>
</feature>
<feature type="binding site" evidence="1">
    <location>
        <position position="77"/>
    </location>
    <ligand>
        <name>a divalent metal cation</name>
        <dbReference type="ChEBI" id="CHEBI:60240"/>
    </ligand>
</feature>
<feature type="binding site" evidence="1">
    <location>
        <position position="78"/>
    </location>
    <ligand>
        <name>a divalent metal cation</name>
        <dbReference type="ChEBI" id="CHEBI:60240"/>
    </ligand>
</feature>
<feature type="binding site" evidence="1">
    <location>
        <position position="172"/>
    </location>
    <ligand>
        <name>a divalent metal cation</name>
        <dbReference type="ChEBI" id="CHEBI:60240"/>
    </ligand>
</feature>
<evidence type="ECO:0000255" key="1">
    <source>
        <dbReference type="HAMAP-Rule" id="MF_00052"/>
    </source>
</evidence>
<evidence type="ECO:0000255" key="2">
    <source>
        <dbReference type="PROSITE-ProRule" id="PRU01319"/>
    </source>
</evidence>
<gene>
    <name evidence="1" type="primary">rnhB</name>
    <name type="ordered locus">Spy49_0913</name>
</gene>
<sequence length="263" mass="28613">MSTSIKAIKESLEAVTSLSDPLFQELATDARLGVQKALKSRQKAIQADLAEEERLEAMLSYEKALYKEGYQAIAGIDEVGRGPLAGPVVAACVILPQHCKIKGLNDSKKIPKSKHETIYQAVKEKALAIGIGIIDNQLIDEVNIYEATKLAMLEAIKQLEGQLTQPDYLLIDAMTLDIAISQQSILKGDANSLSIAAASIVAKVTRDQMMANYDRIFPGYGFAKNAGYGTKEHLQGLKAYGITPIHRKSFEPVKSMCCDSTNP</sequence>
<accession>B5XLK7</accession>
<keyword id="KW-0963">Cytoplasm</keyword>
<keyword id="KW-0255">Endonuclease</keyword>
<keyword id="KW-0378">Hydrolase</keyword>
<keyword id="KW-0464">Manganese</keyword>
<keyword id="KW-0479">Metal-binding</keyword>
<keyword id="KW-0540">Nuclease</keyword>